<accession>A7GRE3</accession>
<feature type="chain" id="PRO_1000075592" description="Translation initiation factor IF-2">
    <location>
        <begin position="1"/>
        <end position="689"/>
    </location>
</feature>
<feature type="domain" description="tr-type G">
    <location>
        <begin position="191"/>
        <end position="360"/>
    </location>
</feature>
<feature type="region of interest" description="Disordered" evidence="3">
    <location>
        <begin position="70"/>
        <end position="107"/>
    </location>
</feature>
<feature type="region of interest" description="G1" evidence="1">
    <location>
        <begin position="200"/>
        <end position="207"/>
    </location>
</feature>
<feature type="region of interest" description="G2" evidence="1">
    <location>
        <begin position="225"/>
        <end position="229"/>
    </location>
</feature>
<feature type="region of interest" description="G3" evidence="1">
    <location>
        <begin position="246"/>
        <end position="249"/>
    </location>
</feature>
<feature type="region of interest" description="G4" evidence="1">
    <location>
        <begin position="300"/>
        <end position="303"/>
    </location>
</feature>
<feature type="region of interest" description="G5" evidence="1">
    <location>
        <begin position="336"/>
        <end position="338"/>
    </location>
</feature>
<feature type="compositionally biased region" description="Basic residues" evidence="3">
    <location>
        <begin position="71"/>
        <end position="84"/>
    </location>
</feature>
<feature type="binding site" evidence="2">
    <location>
        <begin position="200"/>
        <end position="207"/>
    </location>
    <ligand>
        <name>GTP</name>
        <dbReference type="ChEBI" id="CHEBI:37565"/>
    </ligand>
</feature>
<feature type="binding site" evidence="2">
    <location>
        <begin position="246"/>
        <end position="250"/>
    </location>
    <ligand>
        <name>GTP</name>
        <dbReference type="ChEBI" id="CHEBI:37565"/>
    </ligand>
</feature>
<feature type="binding site" evidence="2">
    <location>
        <begin position="300"/>
        <end position="303"/>
    </location>
    <ligand>
        <name>GTP</name>
        <dbReference type="ChEBI" id="CHEBI:37565"/>
    </ligand>
</feature>
<gene>
    <name evidence="2" type="primary">infB</name>
    <name type="ordered locus">Bcer98_2465</name>
</gene>
<sequence>MSKIRVYEYAKKYNISSKEIITKLKEMNIEVSNHMTMLDDEVVNKLDNEYNNEVKKPSVADEFEVEEKVVRSKKNSNKKKKKGKGNQDKRQENFAGKQQAQTVETPDKITFSGTLTVGELANKLGKEPSEIIKKLFMLGIMATINQDLDKDTIELIASDYGIEVEEEVVIDEIEFETFIDEQDEEEGDLKERPAVVTIMGHVDHGKTTLLDSIRNSKVTAGEAGGITQHIGAYQVEVNDKKITFLDTPGHAAFTTMRARGAQVTDITILVVAADDGVMPQTVEAINHAKAAGVPIIVAVNKMDKPAANPDRVMQELTEYELVPEAWGGDTIFVPISAIKGEGIDNLLEMILLVSEVEEYKANPNRYATGTVIEAQLDKGKGAIATLLVQNGTLRVGDPIVVGTTYGRVRAMVNDIGRRVKVAGPSTPVEITGLNEVPQAGDRFMAFADEKKARQIGESRAQQALLAQRGEKSKLSLEDLFQQIQEGDVKEINLIVKADVQGSVEAMAASLRKIDVEGVKVKIIHTGVGAITESDIILASASNAIVIGFNVRPDVNAKRTAESENVDIRLHRIIYKAIEEIEAAMRGMLDPEFEEKVIGQAEVRQTFKVTKVGTIAGCYVTDGKITRDSGVRIIRDGVVIYEGQLDTLKRFKDDVKEVAQNYECGITIEKYNDIKEGDIIEAFIMEEVKR</sequence>
<dbReference type="EMBL" id="CP000764">
    <property type="protein sequence ID" value="ABS22701.1"/>
    <property type="molecule type" value="Genomic_DNA"/>
</dbReference>
<dbReference type="RefSeq" id="WP_012094905.1">
    <property type="nucleotide sequence ID" value="NC_009674.1"/>
</dbReference>
<dbReference type="SMR" id="A7GRE3"/>
<dbReference type="STRING" id="315749.Bcer98_2465"/>
<dbReference type="GeneID" id="33897720"/>
<dbReference type="KEGG" id="bcy:Bcer98_2465"/>
<dbReference type="eggNOG" id="COG0532">
    <property type="taxonomic scope" value="Bacteria"/>
</dbReference>
<dbReference type="HOGENOM" id="CLU_006301_5_1_9"/>
<dbReference type="OrthoDB" id="9811804at2"/>
<dbReference type="Proteomes" id="UP000002300">
    <property type="component" value="Chromosome"/>
</dbReference>
<dbReference type="GO" id="GO:0005829">
    <property type="term" value="C:cytosol"/>
    <property type="evidence" value="ECO:0007669"/>
    <property type="project" value="TreeGrafter"/>
</dbReference>
<dbReference type="GO" id="GO:0005525">
    <property type="term" value="F:GTP binding"/>
    <property type="evidence" value="ECO:0007669"/>
    <property type="project" value="UniProtKB-KW"/>
</dbReference>
<dbReference type="GO" id="GO:0003924">
    <property type="term" value="F:GTPase activity"/>
    <property type="evidence" value="ECO:0007669"/>
    <property type="project" value="UniProtKB-UniRule"/>
</dbReference>
<dbReference type="GO" id="GO:0003743">
    <property type="term" value="F:translation initiation factor activity"/>
    <property type="evidence" value="ECO:0007669"/>
    <property type="project" value="UniProtKB-UniRule"/>
</dbReference>
<dbReference type="CDD" id="cd01887">
    <property type="entry name" value="IF2_eIF5B"/>
    <property type="match status" value="1"/>
</dbReference>
<dbReference type="CDD" id="cd03702">
    <property type="entry name" value="IF2_mtIF2_II"/>
    <property type="match status" value="1"/>
</dbReference>
<dbReference type="CDD" id="cd03692">
    <property type="entry name" value="mtIF2_IVc"/>
    <property type="match status" value="1"/>
</dbReference>
<dbReference type="FunFam" id="2.40.30.10:FF:000007">
    <property type="entry name" value="Translation initiation factor IF-2"/>
    <property type="match status" value="1"/>
</dbReference>
<dbReference type="FunFam" id="2.40.30.10:FF:000008">
    <property type="entry name" value="Translation initiation factor IF-2"/>
    <property type="match status" value="1"/>
</dbReference>
<dbReference type="FunFam" id="3.40.50.10050:FF:000001">
    <property type="entry name" value="Translation initiation factor IF-2"/>
    <property type="match status" value="1"/>
</dbReference>
<dbReference type="FunFam" id="3.40.50.300:FF:000019">
    <property type="entry name" value="Translation initiation factor IF-2"/>
    <property type="match status" value="1"/>
</dbReference>
<dbReference type="Gene3D" id="1.10.10.2480">
    <property type="match status" value="1"/>
</dbReference>
<dbReference type="Gene3D" id="3.40.50.300">
    <property type="entry name" value="P-loop containing nucleotide triphosphate hydrolases"/>
    <property type="match status" value="1"/>
</dbReference>
<dbReference type="Gene3D" id="2.40.30.10">
    <property type="entry name" value="Translation factors"/>
    <property type="match status" value="2"/>
</dbReference>
<dbReference type="Gene3D" id="3.40.50.10050">
    <property type="entry name" value="Translation initiation factor IF- 2, domain 3"/>
    <property type="match status" value="1"/>
</dbReference>
<dbReference type="HAMAP" id="MF_00100_B">
    <property type="entry name" value="IF_2_B"/>
    <property type="match status" value="1"/>
</dbReference>
<dbReference type="InterPro" id="IPR053905">
    <property type="entry name" value="EF-G-like_DII"/>
</dbReference>
<dbReference type="InterPro" id="IPR044145">
    <property type="entry name" value="IF2_II"/>
</dbReference>
<dbReference type="InterPro" id="IPR006847">
    <property type="entry name" value="IF2_N"/>
</dbReference>
<dbReference type="InterPro" id="IPR027417">
    <property type="entry name" value="P-loop_NTPase"/>
</dbReference>
<dbReference type="InterPro" id="IPR005225">
    <property type="entry name" value="Small_GTP-bd"/>
</dbReference>
<dbReference type="InterPro" id="IPR000795">
    <property type="entry name" value="T_Tr_GTP-bd_dom"/>
</dbReference>
<dbReference type="InterPro" id="IPR000178">
    <property type="entry name" value="TF_IF2_bacterial-like"/>
</dbReference>
<dbReference type="InterPro" id="IPR015760">
    <property type="entry name" value="TIF_IF2"/>
</dbReference>
<dbReference type="InterPro" id="IPR023115">
    <property type="entry name" value="TIF_IF2_dom3"/>
</dbReference>
<dbReference type="InterPro" id="IPR036925">
    <property type="entry name" value="TIF_IF2_dom3_sf"/>
</dbReference>
<dbReference type="InterPro" id="IPR009000">
    <property type="entry name" value="Transl_B-barrel_sf"/>
</dbReference>
<dbReference type="NCBIfam" id="TIGR00487">
    <property type="entry name" value="IF-2"/>
    <property type="match status" value="1"/>
</dbReference>
<dbReference type="NCBIfam" id="TIGR00231">
    <property type="entry name" value="small_GTP"/>
    <property type="match status" value="1"/>
</dbReference>
<dbReference type="PANTHER" id="PTHR43381:SF5">
    <property type="entry name" value="TR-TYPE G DOMAIN-CONTAINING PROTEIN"/>
    <property type="match status" value="1"/>
</dbReference>
<dbReference type="PANTHER" id="PTHR43381">
    <property type="entry name" value="TRANSLATION INITIATION FACTOR IF-2-RELATED"/>
    <property type="match status" value="1"/>
</dbReference>
<dbReference type="Pfam" id="PF22042">
    <property type="entry name" value="EF-G_D2"/>
    <property type="match status" value="1"/>
</dbReference>
<dbReference type="Pfam" id="PF00009">
    <property type="entry name" value="GTP_EFTU"/>
    <property type="match status" value="1"/>
</dbReference>
<dbReference type="Pfam" id="PF11987">
    <property type="entry name" value="IF-2"/>
    <property type="match status" value="1"/>
</dbReference>
<dbReference type="Pfam" id="PF04760">
    <property type="entry name" value="IF2_N"/>
    <property type="match status" value="2"/>
</dbReference>
<dbReference type="SUPFAM" id="SSF52156">
    <property type="entry name" value="Initiation factor IF2/eIF5b, domain 3"/>
    <property type="match status" value="1"/>
</dbReference>
<dbReference type="SUPFAM" id="SSF52540">
    <property type="entry name" value="P-loop containing nucleoside triphosphate hydrolases"/>
    <property type="match status" value="1"/>
</dbReference>
<dbReference type="SUPFAM" id="SSF50447">
    <property type="entry name" value="Translation proteins"/>
    <property type="match status" value="2"/>
</dbReference>
<dbReference type="PROSITE" id="PS51722">
    <property type="entry name" value="G_TR_2"/>
    <property type="match status" value="1"/>
</dbReference>
<dbReference type="PROSITE" id="PS01176">
    <property type="entry name" value="IF2"/>
    <property type="match status" value="1"/>
</dbReference>
<proteinExistence type="inferred from homology"/>
<protein>
    <recommendedName>
        <fullName evidence="2">Translation initiation factor IF-2</fullName>
    </recommendedName>
</protein>
<comment type="function">
    <text evidence="2">One of the essential components for the initiation of protein synthesis. Protects formylmethionyl-tRNA from spontaneous hydrolysis and promotes its binding to the 30S ribosomal subunits. Also involved in the hydrolysis of GTP during the formation of the 70S ribosomal complex.</text>
</comment>
<comment type="subcellular location">
    <subcellularLocation>
        <location evidence="2">Cytoplasm</location>
    </subcellularLocation>
</comment>
<comment type="similarity">
    <text evidence="2">Belongs to the TRAFAC class translation factor GTPase superfamily. Classic translation factor GTPase family. IF-2 subfamily.</text>
</comment>
<name>IF2_BACCN</name>
<reference key="1">
    <citation type="journal article" date="2008" name="Chem. Biol. Interact.">
        <title>Extending the Bacillus cereus group genomics to putative food-borne pathogens of different toxicity.</title>
        <authorList>
            <person name="Lapidus A."/>
            <person name="Goltsman E."/>
            <person name="Auger S."/>
            <person name="Galleron N."/>
            <person name="Segurens B."/>
            <person name="Dossat C."/>
            <person name="Land M.L."/>
            <person name="Broussolle V."/>
            <person name="Brillard J."/>
            <person name="Guinebretiere M.-H."/>
            <person name="Sanchis V."/>
            <person name="Nguen-the C."/>
            <person name="Lereclus D."/>
            <person name="Richardson P."/>
            <person name="Wincker P."/>
            <person name="Weissenbach J."/>
            <person name="Ehrlich S.D."/>
            <person name="Sorokin A."/>
        </authorList>
    </citation>
    <scope>NUCLEOTIDE SEQUENCE [LARGE SCALE GENOMIC DNA]</scope>
    <source>
        <strain>DSM 22905 / CIP 110041 / 391-98 / NVH 391-98</strain>
    </source>
</reference>
<evidence type="ECO:0000250" key="1"/>
<evidence type="ECO:0000255" key="2">
    <source>
        <dbReference type="HAMAP-Rule" id="MF_00100"/>
    </source>
</evidence>
<evidence type="ECO:0000256" key="3">
    <source>
        <dbReference type="SAM" id="MobiDB-lite"/>
    </source>
</evidence>
<organism>
    <name type="scientific">Bacillus cytotoxicus (strain DSM 22905 / CIP 110041 / 391-98 / NVH 391-98)</name>
    <dbReference type="NCBI Taxonomy" id="315749"/>
    <lineage>
        <taxon>Bacteria</taxon>
        <taxon>Bacillati</taxon>
        <taxon>Bacillota</taxon>
        <taxon>Bacilli</taxon>
        <taxon>Bacillales</taxon>
        <taxon>Bacillaceae</taxon>
        <taxon>Bacillus</taxon>
        <taxon>Bacillus cereus group</taxon>
    </lineage>
</organism>
<keyword id="KW-0963">Cytoplasm</keyword>
<keyword id="KW-0342">GTP-binding</keyword>
<keyword id="KW-0396">Initiation factor</keyword>
<keyword id="KW-0547">Nucleotide-binding</keyword>
<keyword id="KW-0648">Protein biosynthesis</keyword>